<reference evidence="8 9" key="1">
    <citation type="journal article" date="2008" name="Appl. Microbiol. Biotechnol.">
        <title>Novel peroxidases of Marasmius scorodonius degrade beta-carotene.</title>
        <authorList>
            <person name="Scheibner M."/>
            <person name="Huelsdau B."/>
            <person name="Zelena K."/>
            <person name="Nimtz M."/>
            <person name="de Boer L."/>
            <person name="Berger R.G."/>
            <person name="Zorn H."/>
        </authorList>
    </citation>
    <scope>NUCLEOTIDE SEQUENCE [GENOMIC DNA]</scope>
    <scope>PROTEIN SEQUENCE OF 56-83; 390-402; 460-470 AND 495-508</scope>
    <scope>FUNCTION</scope>
    <scope>COFACTOR</scope>
    <scope>SUBUNIT</scope>
    <scope>SUBCELLULAR LOCATION</scope>
    <scope>MASS SPECTROMETRY</scope>
    <source>
        <strain evidence="5">CBS 137.86</strain>
    </source>
</reference>
<reference key="2">
    <citation type="journal article" date="2013" name="Appl. Microbiol. Biotechnol.">
        <title>Substrate oxidation by dye-decolorizing peroxidases (DyPs) from wood- and litter-degrading agaricomycetes compared to other fungal and plant heme-peroxidases.</title>
        <authorList>
            <person name="Liers C."/>
            <person name="Pecyna M.J."/>
            <person name="Kellner H."/>
            <person name="Worrich A."/>
            <person name="Zorn H."/>
            <person name="Steffen K.T."/>
            <person name="Hofrichter M."/>
            <person name="Ullrich R."/>
        </authorList>
    </citation>
    <scope>FUNCTION</scope>
    <scope>CATALYTIC ACTIVITY</scope>
    <scope>BIOPHYSICOCHEMICAL PROPERTIES</scope>
</reference>
<dbReference type="EC" id="1.11.1.19" evidence="6"/>
<dbReference type="EC" id="1.11.1.7" evidence="6"/>
<dbReference type="EMBL" id="AM921678">
    <property type="protein sequence ID" value="CAP53934.1"/>
    <property type="molecule type" value="Genomic_DNA"/>
</dbReference>
<dbReference type="SMR" id="B0BK71"/>
<dbReference type="PeroxiBase" id="6675">
    <property type="entry name" value="MscDyPrx01"/>
</dbReference>
<dbReference type="GO" id="GO:0005829">
    <property type="term" value="C:cytosol"/>
    <property type="evidence" value="ECO:0007669"/>
    <property type="project" value="TreeGrafter"/>
</dbReference>
<dbReference type="GO" id="GO:0005576">
    <property type="term" value="C:extracellular region"/>
    <property type="evidence" value="ECO:0007669"/>
    <property type="project" value="UniProtKB-SubCell"/>
</dbReference>
<dbReference type="GO" id="GO:0020037">
    <property type="term" value="F:heme binding"/>
    <property type="evidence" value="ECO:0000314"/>
    <property type="project" value="UniProtKB"/>
</dbReference>
<dbReference type="GO" id="GO:0140825">
    <property type="term" value="F:lactoperoxidase activity"/>
    <property type="evidence" value="ECO:0007669"/>
    <property type="project" value="UniProtKB-EC"/>
</dbReference>
<dbReference type="GO" id="GO:0046872">
    <property type="term" value="F:metal ion binding"/>
    <property type="evidence" value="ECO:0007669"/>
    <property type="project" value="UniProtKB-KW"/>
</dbReference>
<dbReference type="GO" id="GO:0004601">
    <property type="term" value="F:peroxidase activity"/>
    <property type="evidence" value="ECO:0000314"/>
    <property type="project" value="UniProtKB"/>
</dbReference>
<dbReference type="GO" id="GO:0016121">
    <property type="term" value="P:carotene catabolic process"/>
    <property type="evidence" value="ECO:0000314"/>
    <property type="project" value="UniProtKB"/>
</dbReference>
<dbReference type="InterPro" id="IPR011008">
    <property type="entry name" value="Dimeric_a/b-barrel"/>
</dbReference>
<dbReference type="InterPro" id="IPR049509">
    <property type="entry name" value="DyP_N"/>
</dbReference>
<dbReference type="InterPro" id="IPR048328">
    <property type="entry name" value="Dyp_perox_C"/>
</dbReference>
<dbReference type="InterPro" id="IPR006314">
    <property type="entry name" value="Dyp_peroxidase"/>
</dbReference>
<dbReference type="NCBIfam" id="TIGR01413">
    <property type="entry name" value="Dyp_perox_fam"/>
    <property type="match status" value="1"/>
</dbReference>
<dbReference type="PANTHER" id="PTHR30521:SF4">
    <property type="entry name" value="DEFERROCHELATASE"/>
    <property type="match status" value="1"/>
</dbReference>
<dbReference type="PANTHER" id="PTHR30521">
    <property type="entry name" value="DEFERROCHELATASE/PEROXIDASE"/>
    <property type="match status" value="1"/>
</dbReference>
<dbReference type="Pfam" id="PF21105">
    <property type="entry name" value="DyP_N"/>
    <property type="match status" value="1"/>
</dbReference>
<dbReference type="Pfam" id="PF20628">
    <property type="entry name" value="Dyp_perox_C"/>
    <property type="match status" value="1"/>
</dbReference>
<dbReference type="SUPFAM" id="SSF54909">
    <property type="entry name" value="Dimeric alpha+beta barrel"/>
    <property type="match status" value="1"/>
</dbReference>
<dbReference type="PROSITE" id="PS51404">
    <property type="entry name" value="DYP_PEROXIDASE"/>
    <property type="match status" value="1"/>
</dbReference>
<gene>
    <name evidence="9" type="primary">msp1</name>
</gene>
<accession>B0BK71</accession>
<feature type="signal peptide" evidence="3">
    <location>
        <begin position="1"/>
        <end position="20"/>
    </location>
</feature>
<feature type="propeptide" id="PRO_0000386441" evidence="3 5">
    <location>
        <begin position="21"/>
        <end position="55"/>
    </location>
</feature>
<feature type="chain" id="PRO_0000386442" description="Dye-decolorizing peroxidase msp1">
    <location>
        <begin position="56"/>
        <end position="513"/>
    </location>
</feature>
<feature type="region of interest" description="Disordered" evidence="4">
    <location>
        <begin position="33"/>
        <end position="52"/>
    </location>
</feature>
<feature type="active site" description="Proton acceptor" evidence="1">
    <location>
        <position position="228"/>
    </location>
</feature>
<feature type="binding site" description="axial binding residue" evidence="1">
    <location>
        <position position="365"/>
    </location>
    <ligand>
        <name>heme</name>
        <dbReference type="ChEBI" id="CHEBI:30413"/>
    </ligand>
    <ligandPart>
        <name>Fe</name>
        <dbReference type="ChEBI" id="CHEBI:18248"/>
    </ligandPart>
</feature>
<feature type="sequence conflict" description="In Ref. 1; AA sequence." evidence="8" ref="1">
    <original>G</original>
    <variation>T</variation>
    <location>
        <position position="74"/>
    </location>
</feature>
<proteinExistence type="evidence at protein level"/>
<keyword id="KW-0903">Direct protein sequencing</keyword>
<keyword id="KW-0349">Heme</keyword>
<keyword id="KW-0408">Iron</keyword>
<keyword id="KW-0479">Metal-binding</keyword>
<keyword id="KW-0560">Oxidoreductase</keyword>
<keyword id="KW-0575">Peroxidase</keyword>
<keyword id="KW-0964">Secreted</keyword>
<keyword id="KW-0732">Signal</keyword>
<organism>
    <name type="scientific">Mycetinis scorodonius</name>
    <name type="common">Garlic mushroom</name>
    <name type="synonym">Marasmius scorodonius</name>
    <dbReference type="NCBI Taxonomy" id="182058"/>
    <lineage>
        <taxon>Eukaryota</taxon>
        <taxon>Fungi</taxon>
        <taxon>Dikarya</taxon>
        <taxon>Basidiomycota</taxon>
        <taxon>Agaricomycotina</taxon>
        <taxon>Agaricomycetes</taxon>
        <taxon>Agaricomycetidae</taxon>
        <taxon>Agaricales</taxon>
        <taxon>Marasmiineae</taxon>
        <taxon>Omphalotaceae</taxon>
        <taxon>Mycetinis</taxon>
    </lineage>
</organism>
<evidence type="ECO:0000250" key="1">
    <source>
        <dbReference type="UniProtKB" id="I2DBY1"/>
    </source>
</evidence>
<evidence type="ECO:0000250" key="2">
    <source>
        <dbReference type="UniProtKB" id="P31545"/>
    </source>
</evidence>
<evidence type="ECO:0000255" key="3"/>
<evidence type="ECO:0000256" key="4">
    <source>
        <dbReference type="SAM" id="MobiDB-lite"/>
    </source>
</evidence>
<evidence type="ECO:0000269" key="5">
    <source>
    </source>
</evidence>
<evidence type="ECO:0000269" key="6">
    <source>
    </source>
</evidence>
<evidence type="ECO:0000303" key="7">
    <source>
    </source>
</evidence>
<evidence type="ECO:0000305" key="8"/>
<evidence type="ECO:0000312" key="9">
    <source>
        <dbReference type="EMBL" id="CAP53934.1"/>
    </source>
</evidence>
<protein>
    <recommendedName>
        <fullName>Dye-decolorizing peroxidase msp1</fullName>
        <ecNumber evidence="6">1.11.1.19</ecNumber>
        <ecNumber evidence="6">1.11.1.7</ecNumber>
    </recommendedName>
    <alternativeName>
        <fullName evidence="7">Peroxidase 1</fullName>
        <shortName evidence="7">MsP1</shortName>
    </alternativeName>
</protein>
<sequence length="513" mass="54972">MKLFSASVFAAIIASHYASATAHIRAPNVKPRRTNSLLTAPPQQPPLPSAQQAASASSSAGLNLTDIQGDILIGMKKNKELFFFFSITDAATFKAKLGSDILELITSTNQLLAVATQPITAVNVAFSSTGLKALGITDDLKDPVFEAGMLSNAVSDLSDPGTGNWVPGFVGTSVHGVFLLASDTIDNVNTELANIQTILNGSITEIHRLQGEARPGDQQGHEHFGFMDGISNPAVDGFTPPAEIRPGQALIPPGIMLLGEANDTFQNDRPPWAKDGSFLVFRQMQQRAPEFNKFLQDHALNMPNMTSEQGADLLGARIVGRWKSDAPIDLTPLVDDPVLAADNQRNNNFDFSDATNQTRCPFSAHIRKANPRGDLGGINKFPNQHIIRAGIPYGPEVTDAEKASNSSSTDPSLERGLAFVAYQSNIQNGFVFLQKNWVDNTNFFRPGTGVDPLIGTNSRNSGTDAPNTPRVVSGLDPNNATSTIEIGIDFVVSRGGEYFFSPSLSAIRTVLSV</sequence>
<comment type="function">
    <text evidence="5 6">Manganese-independent peroxidase that is able to convert a large number of compounds, but its physiological substrate is not known (PubMed:23111597). In addition to classic peroxidase substrates (e.g. 2,6-dimethoxyphenol), oxidizes dyes such as Reactive Blue 5 (PubMed:23111597). Also degrades beta-carotene (PubMed:18038130).</text>
</comment>
<comment type="catalytic activity">
    <reaction evidence="6">
        <text>Reactive Blue 5 + 2 H2O2 = 2,2'-disulfonyl azobenzene + 3-[(4-amino-6-chloro-1,3,5-triazin-2-yl)amino]benzenesulfonate + phthalate + 2 H2O + 2 H(+)</text>
        <dbReference type="Rhea" id="RHEA:28086"/>
        <dbReference type="ChEBI" id="CHEBI:15377"/>
        <dbReference type="ChEBI" id="CHEBI:15378"/>
        <dbReference type="ChEBI" id="CHEBI:16240"/>
        <dbReference type="ChEBI" id="CHEBI:17563"/>
        <dbReference type="ChEBI" id="CHEBI:63950"/>
        <dbReference type="ChEBI" id="CHEBI:63955"/>
        <dbReference type="ChEBI" id="CHEBI:64278"/>
        <dbReference type="EC" id="1.11.1.19"/>
    </reaction>
</comment>
<comment type="catalytic activity">
    <reaction evidence="6">
        <text>2 a phenolic donor + H2O2 = 2 a phenolic radical donor + 2 H2O</text>
        <dbReference type="Rhea" id="RHEA:56136"/>
        <dbReference type="ChEBI" id="CHEBI:15377"/>
        <dbReference type="ChEBI" id="CHEBI:16240"/>
        <dbReference type="ChEBI" id="CHEBI:139520"/>
        <dbReference type="ChEBI" id="CHEBI:139521"/>
        <dbReference type="EC" id="1.11.1.7"/>
    </reaction>
</comment>
<comment type="cofactor">
    <cofactor evidence="2 5">
        <name>heme b</name>
        <dbReference type="ChEBI" id="CHEBI:60344"/>
    </cofactor>
    <text evidence="2 5">Binds 1 heme b (iron(II)-protoporphyrin IX) group non-covalently per monomer.</text>
</comment>
<comment type="biophysicochemical properties">
    <absorption>
        <max evidence="6">406 nm</max>
    </absorption>
    <kinetics>
        <KM evidence="6">5 uM for H(2)O(2)</KM>
    </kinetics>
</comment>
<comment type="subunit">
    <text evidence="5">Homodimer.</text>
</comment>
<comment type="subcellular location">
    <subcellularLocation>
        <location evidence="5">Secreted</location>
    </subcellularLocation>
</comment>
<comment type="mass spectrometry" mass="64200.0" method="MALDI" evidence="5"/>
<comment type="similarity">
    <text evidence="3">Belongs to the DyP-type peroxidase family.</text>
</comment>
<name>MSP1_MYCSO</name>